<proteinExistence type="evidence at transcript level"/>
<dbReference type="EMBL" id="CP000800">
    <property type="protein sequence ID" value="ABV20025.1"/>
    <property type="molecule type" value="Genomic_DNA"/>
</dbReference>
<dbReference type="RefSeq" id="WP_001197877.1">
    <property type="nucleotide sequence ID" value="NC_009801.1"/>
</dbReference>
<dbReference type="SMR" id="A7ZNP8"/>
<dbReference type="GeneID" id="75172200"/>
<dbReference type="KEGG" id="ecw:EcE24377A_2367"/>
<dbReference type="HOGENOM" id="CLU_002755_1_2_6"/>
<dbReference type="Proteomes" id="UP000001122">
    <property type="component" value="Chromosome"/>
</dbReference>
<dbReference type="GO" id="GO:0005886">
    <property type="term" value="C:plasma membrane"/>
    <property type="evidence" value="ECO:0007669"/>
    <property type="project" value="UniProtKB-SubCell"/>
</dbReference>
<dbReference type="GO" id="GO:0042910">
    <property type="term" value="F:xenobiotic transmembrane transporter activity"/>
    <property type="evidence" value="ECO:0007669"/>
    <property type="project" value="TreeGrafter"/>
</dbReference>
<dbReference type="FunFam" id="1.20.1640.10:FF:000001">
    <property type="entry name" value="Efflux pump membrane transporter"/>
    <property type="match status" value="1"/>
</dbReference>
<dbReference type="FunFam" id="3.30.70.1430:FF:000001">
    <property type="entry name" value="Efflux pump membrane transporter"/>
    <property type="match status" value="1"/>
</dbReference>
<dbReference type="FunFam" id="3.30.2090.10:FF:000003">
    <property type="entry name" value="Multidrug resistance protein MdtB"/>
    <property type="match status" value="1"/>
</dbReference>
<dbReference type="FunFam" id="3.30.2090.10:FF:000006">
    <property type="entry name" value="Multidrug resistance protein MdtB"/>
    <property type="match status" value="1"/>
</dbReference>
<dbReference type="Gene3D" id="3.30.70.1430">
    <property type="entry name" value="Multidrug efflux transporter AcrB pore domain"/>
    <property type="match status" value="2"/>
</dbReference>
<dbReference type="Gene3D" id="3.30.70.1440">
    <property type="entry name" value="Multidrug efflux transporter AcrB pore domain"/>
    <property type="match status" value="1"/>
</dbReference>
<dbReference type="Gene3D" id="3.30.70.1320">
    <property type="entry name" value="Multidrug efflux transporter AcrB pore domain like"/>
    <property type="match status" value="1"/>
</dbReference>
<dbReference type="Gene3D" id="3.30.2090.10">
    <property type="entry name" value="Multidrug efflux transporter AcrB TolC docking domain, DN and DC subdomains"/>
    <property type="match status" value="2"/>
</dbReference>
<dbReference type="Gene3D" id="1.20.1640.10">
    <property type="entry name" value="Multidrug efflux transporter AcrB transmembrane domain"/>
    <property type="match status" value="2"/>
</dbReference>
<dbReference type="HAMAP" id="MF_01423">
    <property type="entry name" value="MdtB"/>
    <property type="match status" value="1"/>
</dbReference>
<dbReference type="InterPro" id="IPR027463">
    <property type="entry name" value="AcrB_DN_DC_subdom"/>
</dbReference>
<dbReference type="InterPro" id="IPR001036">
    <property type="entry name" value="Acrflvin-R"/>
</dbReference>
<dbReference type="InterPro" id="IPR022831">
    <property type="entry name" value="Multidrug-R_MdtB"/>
</dbReference>
<dbReference type="NCBIfam" id="NF007798">
    <property type="entry name" value="PRK10503.1"/>
    <property type="match status" value="1"/>
</dbReference>
<dbReference type="NCBIfam" id="NF033617">
    <property type="entry name" value="RND_permease_2"/>
    <property type="match status" value="1"/>
</dbReference>
<dbReference type="PANTHER" id="PTHR32063">
    <property type="match status" value="1"/>
</dbReference>
<dbReference type="PANTHER" id="PTHR32063:SF21">
    <property type="entry name" value="MULTIDRUG RESISTANCE PROTEIN MDTB"/>
    <property type="match status" value="1"/>
</dbReference>
<dbReference type="Pfam" id="PF00873">
    <property type="entry name" value="ACR_tran"/>
    <property type="match status" value="1"/>
</dbReference>
<dbReference type="PRINTS" id="PR00702">
    <property type="entry name" value="ACRIFLAVINRP"/>
</dbReference>
<dbReference type="SUPFAM" id="SSF82693">
    <property type="entry name" value="Multidrug efflux transporter AcrB pore domain, PN1, PN2, PC1 and PC2 subdomains"/>
    <property type="match status" value="3"/>
</dbReference>
<dbReference type="SUPFAM" id="SSF82714">
    <property type="entry name" value="Multidrug efflux transporter AcrB TolC docking domain, DN and DC subdomains"/>
    <property type="match status" value="2"/>
</dbReference>
<dbReference type="SUPFAM" id="SSF82866">
    <property type="entry name" value="Multidrug efflux transporter AcrB transmembrane domain"/>
    <property type="match status" value="2"/>
</dbReference>
<sequence>MQVLPPSSTGGPSRLFIMRPVATTLLMVAILLAGIIGYRALPVSALPEVDYPTIQVVTLYPGASPDVMTSAVTAPLERQFGQMSGLKQMSSQSSGGASVITLQFQLTLPLDVAEQEVQAAINAATNLLPSDLPNPPVYSKVNPADPPIMTLAVTSTAMPMTQVEDMVETRVAQKISQISGVGLVTLSGGQRPAVRVKLNAQAIAALGLTSETVRTAITGANVNSAKGSLDGPSRAVTLSANDQMQSAEEYRQLIIAYQNGAPIRLGDVATVEQGAENSWLGAWANKEQAIVMNVQRQPGANIISTADSIRQMLPQLTESLPKSVKVTVLSDRTTNIRASVDDTQFELMMAIALVVMIIYLFLRNIPATIIPGVAVPLSLIGTFAVMVFLDFSINNLTLMALTIATGFVVDDAIVVIENISRYIEKGEKPLAAALKGAGEIGFTIISLTFSLIAVLIPLLFMGDIVGRLFREFAITLAVAILISAVVSLTLTPMMCARMLSQESLRKQNRFSRASEKMFDRIIAAYGRGLAKVLNHPWLTLSVALSTLLLSVLLWVFIPKGFFPVQDNGIIQGTLQAPQSSSFANMAQRQRQVADVILQDPAVQSLTSFVGVDGTNPSLNSARLQINLKPLDERDDRVQKVIARLQTAVDKVPGVDLFLQPTQDLTIDTQVSRTQYQFTLQATSLDALSTWVPQLMEKLQQLPQLSDVSSDWQDKGLVAYVNVDRDSASRLGISMADVDNALYNAFGQRLISTIYTQANQYRVVLEHNTENTPGLAALDTIRLTSSDGGVVPLSSIAKIEQRFAPLSINHLDQFPVTTISFNVPDNYSLGDAVQAIMDTEKTLNLPVDITTQFQGSTLAFQSALGSTVWLIVAAVVAMYIVLGILYESFIHPITILSTLPTAGVGALLALMIAGSELDVIAIIGIILLIGIVKKNAIMMIDFALAAEREQGMSPRDAIYQACLLRFRPILMTTLAALLGALPLMLSTGVGAELRRPLGIGMVGGLIVSQVLTLFTTPVIYLLFDRLALWTKSRFARHEEEA</sequence>
<comment type="function">
    <text evidence="1">The MdtABC tripartite complex confers resistance against novobiocin and deoxycholate.</text>
</comment>
<comment type="subunit">
    <text evidence="1">Part of a tripartite efflux system composed of MdtA, MdtB and MdtC. MdtB forms a heteromultimer with MdtC.</text>
</comment>
<comment type="subcellular location">
    <subcellularLocation>
        <location evidence="1">Cell inner membrane</location>
        <topology evidence="1">Multi-pass membrane protein</topology>
    </subcellularLocation>
</comment>
<comment type="induction">
    <text>The mdtABC operon is transcriptionally activated by BaeR.</text>
</comment>
<comment type="similarity">
    <text evidence="1">Belongs to the resistance-nodulation-cell division (RND) (TC 2.A.6) family. MdtB subfamily.</text>
</comment>
<accession>A7ZNP8</accession>
<keyword id="KW-0997">Cell inner membrane</keyword>
<keyword id="KW-1003">Cell membrane</keyword>
<keyword id="KW-0472">Membrane</keyword>
<keyword id="KW-1185">Reference proteome</keyword>
<keyword id="KW-0812">Transmembrane</keyword>
<keyword id="KW-1133">Transmembrane helix</keyword>
<keyword id="KW-0813">Transport</keyword>
<organism>
    <name type="scientific">Escherichia coli O139:H28 (strain E24377A / ETEC)</name>
    <dbReference type="NCBI Taxonomy" id="331111"/>
    <lineage>
        <taxon>Bacteria</taxon>
        <taxon>Pseudomonadati</taxon>
        <taxon>Pseudomonadota</taxon>
        <taxon>Gammaproteobacteria</taxon>
        <taxon>Enterobacterales</taxon>
        <taxon>Enterobacteriaceae</taxon>
        <taxon>Escherichia</taxon>
    </lineage>
</organism>
<reference key="1">
    <citation type="journal article" date="2008" name="J. Bacteriol.">
        <title>The pangenome structure of Escherichia coli: comparative genomic analysis of E. coli commensal and pathogenic isolates.</title>
        <authorList>
            <person name="Rasko D.A."/>
            <person name="Rosovitz M.J."/>
            <person name="Myers G.S.A."/>
            <person name="Mongodin E.F."/>
            <person name="Fricke W.F."/>
            <person name="Gajer P."/>
            <person name="Crabtree J."/>
            <person name="Sebaihia M."/>
            <person name="Thomson N.R."/>
            <person name="Chaudhuri R."/>
            <person name="Henderson I.R."/>
            <person name="Sperandio V."/>
            <person name="Ravel J."/>
        </authorList>
    </citation>
    <scope>NUCLEOTIDE SEQUENCE [LARGE SCALE GENOMIC DNA]</scope>
    <source>
        <strain>E24377A / ETEC</strain>
    </source>
</reference>
<name>MDTB_ECO24</name>
<evidence type="ECO:0000255" key="1">
    <source>
        <dbReference type="HAMAP-Rule" id="MF_01423"/>
    </source>
</evidence>
<protein>
    <recommendedName>
        <fullName evidence="1">Multidrug resistance protein MdtB</fullName>
    </recommendedName>
    <alternativeName>
        <fullName evidence="1">Multidrug transporter MdtB</fullName>
    </alternativeName>
</protein>
<feature type="chain" id="PRO_1000068502" description="Multidrug resistance protein MdtB">
    <location>
        <begin position="1"/>
        <end position="1040"/>
    </location>
</feature>
<feature type="transmembrane region" description="Helical" evidence="1">
    <location>
        <begin position="16"/>
        <end position="36"/>
    </location>
</feature>
<feature type="transmembrane region" description="Helical" evidence="1">
    <location>
        <begin position="347"/>
        <end position="367"/>
    </location>
</feature>
<feature type="transmembrane region" description="Helical" evidence="1">
    <location>
        <begin position="369"/>
        <end position="389"/>
    </location>
</feature>
<feature type="transmembrane region" description="Helical" evidence="1">
    <location>
        <begin position="396"/>
        <end position="416"/>
    </location>
</feature>
<feature type="transmembrane region" description="Helical" evidence="1">
    <location>
        <begin position="440"/>
        <end position="460"/>
    </location>
</feature>
<feature type="transmembrane region" description="Helical" evidence="1">
    <location>
        <begin position="472"/>
        <end position="492"/>
    </location>
</feature>
<feature type="transmembrane region" description="Helical" evidence="1">
    <location>
        <begin position="537"/>
        <end position="557"/>
    </location>
</feature>
<feature type="transmembrane region" description="Helical" evidence="1">
    <location>
        <begin position="863"/>
        <end position="883"/>
    </location>
</feature>
<feature type="transmembrane region" description="Helical" evidence="1">
    <location>
        <begin position="888"/>
        <end position="908"/>
    </location>
</feature>
<feature type="transmembrane region" description="Helical" evidence="1">
    <location>
        <begin position="911"/>
        <end position="931"/>
    </location>
</feature>
<feature type="transmembrane region" description="Helical" evidence="1">
    <location>
        <begin position="968"/>
        <end position="988"/>
    </location>
</feature>
<feature type="transmembrane region" description="Helical" evidence="1">
    <location>
        <begin position="998"/>
        <end position="1018"/>
    </location>
</feature>
<gene>
    <name evidence="1" type="primary">mdtB</name>
    <name type="ordered locus">EcE24377A_2367</name>
</gene>